<sequence length="199" mass="21955">MVKIGVCGPVGSGKTALIEALTRHMSKDYDMAVITNDIYTKEDAEFMCKNSVMPRERIIGVETGGCPHTAIREDASMNLEAVEEMHGRFPNLELLLIESGGDNLSATFNPELADFTIFVIDVAEGDKIPRKGGPGITRSDLLVINKIDLAPYVGADLKVMERDSKKMRGEKPFIFTNIRAKEGLDDVIAWIKRNALLED</sequence>
<comment type="function">
    <text evidence="1">Facilitates the functional incorporation of the urease nickel metallocenter. This process requires GTP hydrolysis, probably effectuated by UreG.</text>
</comment>
<comment type="subunit">
    <text evidence="1">Homodimer. UreH, UreF and UreG form a complex that acts as a GTP-hydrolysis-dependent molecular chaperone, activating the urease apoprotein by helping to assemble the nickel containing metallocenter of UreC. The UreE protein probably delivers the nickel.</text>
</comment>
<comment type="subcellular location">
    <subcellularLocation>
        <location evidence="1">Cytoplasm</location>
    </subcellularLocation>
</comment>
<comment type="similarity">
    <text evidence="1">Belongs to the SIMIBI class G3E GTPase family. UreG subfamily.</text>
</comment>
<organism>
    <name type="scientific">Helicobacter pylori (strain HPAG1)</name>
    <dbReference type="NCBI Taxonomy" id="357544"/>
    <lineage>
        <taxon>Bacteria</taxon>
        <taxon>Pseudomonadati</taxon>
        <taxon>Campylobacterota</taxon>
        <taxon>Epsilonproteobacteria</taxon>
        <taxon>Campylobacterales</taxon>
        <taxon>Helicobacteraceae</taxon>
        <taxon>Helicobacter</taxon>
    </lineage>
</organism>
<evidence type="ECO:0000255" key="1">
    <source>
        <dbReference type="HAMAP-Rule" id="MF_01389"/>
    </source>
</evidence>
<proteinExistence type="inferred from homology"/>
<accession>Q1CV86</accession>
<name>UREG_HELPH</name>
<reference key="1">
    <citation type="journal article" date="2006" name="Proc. Natl. Acad. Sci. U.S.A.">
        <title>The complete genome sequence of a chronic atrophic gastritis Helicobacter pylori strain: evolution during disease progression.</title>
        <authorList>
            <person name="Oh J.D."/>
            <person name="Kling-Baeckhed H."/>
            <person name="Giannakis M."/>
            <person name="Xu J."/>
            <person name="Fulton R.S."/>
            <person name="Fulton L.A."/>
            <person name="Cordum H.S."/>
            <person name="Wang C."/>
            <person name="Elliott G."/>
            <person name="Edwards J."/>
            <person name="Mardis E.R."/>
            <person name="Engstrand L.G."/>
            <person name="Gordon J.I."/>
        </authorList>
    </citation>
    <scope>NUCLEOTIDE SEQUENCE [LARGE SCALE GENOMIC DNA]</scope>
    <source>
        <strain>HPAG1</strain>
    </source>
</reference>
<protein>
    <recommendedName>
        <fullName evidence="1">Urease accessory protein UreG</fullName>
    </recommendedName>
</protein>
<keyword id="KW-0143">Chaperone</keyword>
<keyword id="KW-0963">Cytoplasm</keyword>
<keyword id="KW-0342">GTP-binding</keyword>
<keyword id="KW-0996">Nickel insertion</keyword>
<keyword id="KW-0547">Nucleotide-binding</keyword>
<feature type="chain" id="PRO_1000145180" description="Urease accessory protein UreG">
    <location>
        <begin position="1"/>
        <end position="199"/>
    </location>
</feature>
<feature type="binding site" evidence="1">
    <location>
        <begin position="8"/>
        <end position="15"/>
    </location>
    <ligand>
        <name>GTP</name>
        <dbReference type="ChEBI" id="CHEBI:37565"/>
    </ligand>
</feature>
<dbReference type="EMBL" id="CP000241">
    <property type="protein sequence ID" value="ABF84136.1"/>
    <property type="molecule type" value="Genomic_DNA"/>
</dbReference>
<dbReference type="RefSeq" id="WP_000238762.1">
    <property type="nucleotide sequence ID" value="NC_008086.1"/>
</dbReference>
<dbReference type="SMR" id="Q1CV86"/>
<dbReference type="KEGG" id="hpa:HPAG1_0069"/>
<dbReference type="HOGENOM" id="CLU_072144_1_0_7"/>
<dbReference type="GO" id="GO:0005737">
    <property type="term" value="C:cytoplasm"/>
    <property type="evidence" value="ECO:0007669"/>
    <property type="project" value="UniProtKB-SubCell"/>
</dbReference>
<dbReference type="GO" id="GO:0005525">
    <property type="term" value="F:GTP binding"/>
    <property type="evidence" value="ECO:0007669"/>
    <property type="project" value="UniProtKB-KW"/>
</dbReference>
<dbReference type="GO" id="GO:0003924">
    <property type="term" value="F:GTPase activity"/>
    <property type="evidence" value="ECO:0007669"/>
    <property type="project" value="InterPro"/>
</dbReference>
<dbReference type="GO" id="GO:0016151">
    <property type="term" value="F:nickel cation binding"/>
    <property type="evidence" value="ECO:0007669"/>
    <property type="project" value="InterPro"/>
</dbReference>
<dbReference type="GO" id="GO:0043419">
    <property type="term" value="P:urea catabolic process"/>
    <property type="evidence" value="ECO:0007669"/>
    <property type="project" value="InterPro"/>
</dbReference>
<dbReference type="CDD" id="cd05540">
    <property type="entry name" value="UreG"/>
    <property type="match status" value="1"/>
</dbReference>
<dbReference type="FunFam" id="3.40.50.300:FF:000208">
    <property type="entry name" value="Urease accessory protein UreG"/>
    <property type="match status" value="1"/>
</dbReference>
<dbReference type="Gene3D" id="3.40.50.300">
    <property type="entry name" value="P-loop containing nucleotide triphosphate hydrolases"/>
    <property type="match status" value="1"/>
</dbReference>
<dbReference type="HAMAP" id="MF_01389">
    <property type="entry name" value="UreG"/>
    <property type="match status" value="1"/>
</dbReference>
<dbReference type="InterPro" id="IPR003495">
    <property type="entry name" value="CobW/HypB/UreG_nucleotide-bd"/>
</dbReference>
<dbReference type="InterPro" id="IPR027417">
    <property type="entry name" value="P-loop_NTPase"/>
</dbReference>
<dbReference type="InterPro" id="IPR004400">
    <property type="entry name" value="UreG"/>
</dbReference>
<dbReference type="NCBIfam" id="TIGR00101">
    <property type="entry name" value="ureG"/>
    <property type="match status" value="1"/>
</dbReference>
<dbReference type="PANTHER" id="PTHR31715">
    <property type="entry name" value="UREASE ACCESSORY PROTEIN G"/>
    <property type="match status" value="1"/>
</dbReference>
<dbReference type="PANTHER" id="PTHR31715:SF0">
    <property type="entry name" value="UREASE ACCESSORY PROTEIN G"/>
    <property type="match status" value="1"/>
</dbReference>
<dbReference type="Pfam" id="PF02492">
    <property type="entry name" value="cobW"/>
    <property type="match status" value="1"/>
</dbReference>
<dbReference type="PIRSF" id="PIRSF005624">
    <property type="entry name" value="Ni-bind_GTPase"/>
    <property type="match status" value="1"/>
</dbReference>
<dbReference type="SUPFAM" id="SSF52540">
    <property type="entry name" value="P-loop containing nucleoside triphosphate hydrolases"/>
    <property type="match status" value="1"/>
</dbReference>
<gene>
    <name evidence="1" type="primary">ureG</name>
    <name type="ordered locus">HPAG1_0069</name>
</gene>